<sequence>MEESINPIISIGPVIFNLTMLAMTLLIVGVIFVFIYWASRNMTLKPKGKQNILEYVYDFVIGFTEPNIGSRYMKDYSLFFLCLFLFMVIANNLGLMTKLQTIDGTNWWSSPTANLQYDLTLSFLVILLTHIESVRRRGFKKSIKSFMSPVFVIPMNILEEFTNFLSLALRIFGNIFAGEVMTSLLLLLSHQAIYWYPVAFGANLAWTAFSVFISCIQAYVFTLLTSVYLGNKINIEEE</sequence>
<feature type="chain" id="PRO_1000145327" description="ATP synthase subunit a">
    <location>
        <begin position="1"/>
        <end position="238"/>
    </location>
</feature>
<feature type="transmembrane region" description="Helical" evidence="1">
    <location>
        <begin position="15"/>
        <end position="35"/>
    </location>
</feature>
<feature type="transmembrane region" description="Helical" evidence="1">
    <location>
        <begin position="76"/>
        <end position="96"/>
    </location>
</feature>
<feature type="transmembrane region" description="Helical" evidence="1">
    <location>
        <begin position="111"/>
        <end position="131"/>
    </location>
</feature>
<feature type="transmembrane region" description="Helical" evidence="1">
    <location>
        <begin position="167"/>
        <end position="187"/>
    </location>
</feature>
<feature type="transmembrane region" description="Helical" evidence="1">
    <location>
        <begin position="208"/>
        <end position="230"/>
    </location>
</feature>
<name>ATP6_STRP4</name>
<reference key="1">
    <citation type="journal article" date="2001" name="Microb. Drug Resist.">
        <title>Annotated draft genomic sequence from a Streptococcus pneumoniae type 19F clinical isolate.</title>
        <authorList>
            <person name="Dopazo J."/>
            <person name="Mendoza A."/>
            <person name="Herrero J."/>
            <person name="Caldara F."/>
            <person name="Humbert Y."/>
            <person name="Friedli L."/>
            <person name="Guerrier M."/>
            <person name="Grand-Schenk E."/>
            <person name="Gandin C."/>
            <person name="de Francesco M."/>
            <person name="Polissi A."/>
            <person name="Buell G."/>
            <person name="Feger G."/>
            <person name="Garcia E."/>
            <person name="Peitsch M."/>
            <person name="Garcia-Bustos J.F."/>
        </authorList>
    </citation>
    <scope>NUCLEOTIDE SEQUENCE [LARGE SCALE GENOMIC DNA]</scope>
    <source>
        <strain>G54</strain>
    </source>
</reference>
<reference key="2">
    <citation type="submission" date="2008-03" db="EMBL/GenBank/DDBJ databases">
        <title>Pneumococcal beta glucoside metabolism investigated by whole genome comparison.</title>
        <authorList>
            <person name="Mulas L."/>
            <person name="Trappetti C."/>
            <person name="Hakenbeck R."/>
            <person name="Iannelli F."/>
            <person name="Pozzi G."/>
            <person name="Davidsen T.M."/>
            <person name="Tettelin H."/>
            <person name="Oggioni M."/>
        </authorList>
    </citation>
    <scope>NUCLEOTIDE SEQUENCE [LARGE SCALE GENOMIC DNA]</scope>
    <source>
        <strain>G54</strain>
    </source>
</reference>
<accession>B5E676</accession>
<organism>
    <name type="scientific">Streptococcus pneumoniae serotype 19F (strain G54)</name>
    <dbReference type="NCBI Taxonomy" id="512566"/>
    <lineage>
        <taxon>Bacteria</taxon>
        <taxon>Bacillati</taxon>
        <taxon>Bacillota</taxon>
        <taxon>Bacilli</taxon>
        <taxon>Lactobacillales</taxon>
        <taxon>Streptococcaceae</taxon>
        <taxon>Streptococcus</taxon>
    </lineage>
</organism>
<dbReference type="EMBL" id="CP001015">
    <property type="protein sequence ID" value="ACF55344.1"/>
    <property type="molecule type" value="Genomic_DNA"/>
</dbReference>
<dbReference type="SMR" id="B5E676"/>
<dbReference type="KEGG" id="spx:SPG_1436"/>
<dbReference type="HOGENOM" id="CLU_041018_2_3_9"/>
<dbReference type="GO" id="GO:0005886">
    <property type="term" value="C:plasma membrane"/>
    <property type="evidence" value="ECO:0007669"/>
    <property type="project" value="UniProtKB-SubCell"/>
</dbReference>
<dbReference type="GO" id="GO:0045259">
    <property type="term" value="C:proton-transporting ATP synthase complex"/>
    <property type="evidence" value="ECO:0007669"/>
    <property type="project" value="UniProtKB-KW"/>
</dbReference>
<dbReference type="GO" id="GO:0046933">
    <property type="term" value="F:proton-transporting ATP synthase activity, rotational mechanism"/>
    <property type="evidence" value="ECO:0007669"/>
    <property type="project" value="UniProtKB-UniRule"/>
</dbReference>
<dbReference type="GO" id="GO:0042777">
    <property type="term" value="P:proton motive force-driven plasma membrane ATP synthesis"/>
    <property type="evidence" value="ECO:0007669"/>
    <property type="project" value="TreeGrafter"/>
</dbReference>
<dbReference type="CDD" id="cd00310">
    <property type="entry name" value="ATP-synt_Fo_a_6"/>
    <property type="match status" value="1"/>
</dbReference>
<dbReference type="Gene3D" id="1.20.120.220">
    <property type="entry name" value="ATP synthase, F0 complex, subunit A"/>
    <property type="match status" value="1"/>
</dbReference>
<dbReference type="HAMAP" id="MF_01393">
    <property type="entry name" value="ATP_synth_a_bact"/>
    <property type="match status" value="1"/>
</dbReference>
<dbReference type="InterPro" id="IPR045082">
    <property type="entry name" value="ATP_syn_F0_a_bact/chloroplast"/>
</dbReference>
<dbReference type="InterPro" id="IPR000568">
    <property type="entry name" value="ATP_synth_F0_asu"/>
</dbReference>
<dbReference type="InterPro" id="IPR035908">
    <property type="entry name" value="F0_ATP_A_sf"/>
</dbReference>
<dbReference type="NCBIfam" id="TIGR01131">
    <property type="entry name" value="ATP_synt_6_or_A"/>
    <property type="match status" value="1"/>
</dbReference>
<dbReference type="NCBIfam" id="NF004479">
    <property type="entry name" value="PRK05815.1-4"/>
    <property type="match status" value="1"/>
</dbReference>
<dbReference type="PANTHER" id="PTHR42823">
    <property type="entry name" value="ATP SYNTHASE SUBUNIT A, CHLOROPLASTIC"/>
    <property type="match status" value="1"/>
</dbReference>
<dbReference type="PANTHER" id="PTHR42823:SF3">
    <property type="entry name" value="ATP SYNTHASE SUBUNIT A, CHLOROPLASTIC"/>
    <property type="match status" value="1"/>
</dbReference>
<dbReference type="Pfam" id="PF00119">
    <property type="entry name" value="ATP-synt_A"/>
    <property type="match status" value="1"/>
</dbReference>
<dbReference type="PRINTS" id="PR00123">
    <property type="entry name" value="ATPASEA"/>
</dbReference>
<dbReference type="SUPFAM" id="SSF81336">
    <property type="entry name" value="F1F0 ATP synthase subunit A"/>
    <property type="match status" value="1"/>
</dbReference>
<keyword id="KW-0066">ATP synthesis</keyword>
<keyword id="KW-1003">Cell membrane</keyword>
<keyword id="KW-0138">CF(0)</keyword>
<keyword id="KW-0375">Hydrogen ion transport</keyword>
<keyword id="KW-0406">Ion transport</keyword>
<keyword id="KW-0472">Membrane</keyword>
<keyword id="KW-0812">Transmembrane</keyword>
<keyword id="KW-1133">Transmembrane helix</keyword>
<keyword id="KW-0813">Transport</keyword>
<comment type="function">
    <text evidence="1">Key component of the proton channel; it plays a direct role in the translocation of protons across the membrane.</text>
</comment>
<comment type="subunit">
    <text evidence="1">F-type ATPases have 2 components, CF(1) - the catalytic core - and CF(0) - the membrane proton channel. CF(1) has five subunits: alpha(3), beta(3), gamma(1), delta(1), epsilon(1). CF(0) has three main subunits: a(1), b(2) and c(9-12). The alpha and beta chains form an alternating ring which encloses part of the gamma chain. CF(1) is attached to CF(0) by a central stalk formed by the gamma and epsilon chains, while a peripheral stalk is formed by the delta and b chains.</text>
</comment>
<comment type="subcellular location">
    <subcellularLocation>
        <location evidence="1">Cell membrane</location>
        <topology evidence="1">Multi-pass membrane protein</topology>
    </subcellularLocation>
</comment>
<comment type="similarity">
    <text evidence="1">Belongs to the ATPase A chain family.</text>
</comment>
<evidence type="ECO:0000255" key="1">
    <source>
        <dbReference type="HAMAP-Rule" id="MF_01393"/>
    </source>
</evidence>
<proteinExistence type="inferred from homology"/>
<gene>
    <name evidence="1" type="primary">atpB</name>
    <name type="ordered locus">SPG_1436</name>
</gene>
<protein>
    <recommendedName>
        <fullName evidence="1">ATP synthase subunit a</fullName>
    </recommendedName>
    <alternativeName>
        <fullName evidence="1">ATP synthase F0 sector subunit a</fullName>
    </alternativeName>
    <alternativeName>
        <fullName evidence="1">F-ATPase subunit 6</fullName>
    </alternativeName>
</protein>